<sequence>MSNCCRILWIAIVIGLGVLYYEITKEFPKPNIPLDTWWGTGKSQKIDTSMRPFKIAINDEVLNTLKVKLSDVSFTPPLEGIDFQYGFNTNTLKKLVDFWRTQYNWREREALLNKYPHFKTNIQGLDIHYVHIKPQVSKNIHVLPMIMVHGWPGSFVEFYKIIPMLTTPRTDYNFVFELILPSIPGYGFSQAAAKPGLGATQIAVIMHNLMDRIGFKKYYVQGGDWGSRIVSAMSTLFPENVLGHHSNLCFLNTLSSNIKSFVGSLFPEWFAGKQNVHKIYPLSEHFFTLLEESGYFHIQATKPDTVGVALRDSPAGLAAYILEKFSTGTNKAWRSAKDGNLQSKFTFTELLDNVMIYYVTGSITTSMRIYAESYSWDHLSLNMDRVPTIVPTACAKFPHEIAYKTDFQLAEKYKTLLQSTIMPRGGHFAALEEPLLLAEDIFSAVKKFIDHHSKKDSKNQENRDL</sequence>
<comment type="function">
    <text evidence="4">Catalyzes juvenile hormone hydrolysis.</text>
</comment>
<comment type="catalytic activity">
    <reaction evidence="4">
        <text>cis-stilbene oxide + H2O = (1R,2R)-hydrobenzoin</text>
        <dbReference type="Rhea" id="RHEA:23900"/>
        <dbReference type="ChEBI" id="CHEBI:15377"/>
        <dbReference type="ChEBI" id="CHEBI:50004"/>
        <dbReference type="ChEBI" id="CHEBI:50014"/>
        <dbReference type="EC" id="3.3.2.9"/>
    </reaction>
</comment>
<comment type="catalytic activity">
    <reaction evidence="4">
        <text>1-(4-methoxyphenyl)-N-methyl-N-[(3-methyloxetan-3-yl)methyl]methanamine + H2O = 2-{[(4-methoxybenzyl)(methyl)amino]methyl}-2-methylpropane-1,3-diol</text>
        <dbReference type="Rhea" id="RHEA:55764"/>
        <dbReference type="ChEBI" id="CHEBI:15377"/>
        <dbReference type="ChEBI" id="CHEBI:139161"/>
        <dbReference type="ChEBI" id="CHEBI:139164"/>
        <dbReference type="EC" id="3.3.2.9"/>
    </reaction>
</comment>
<comment type="subcellular location">
    <subcellularLocation>
        <location evidence="3">Microsome membrane</location>
        <topology evidence="1">Single-pass membrane protein</topology>
    </subcellularLocation>
    <subcellularLocation>
        <location evidence="3">Endoplasmic reticulum membrane</location>
        <topology evidence="1">Single-pass membrane protein</topology>
    </subcellularLocation>
</comment>
<comment type="similarity">
    <text evidence="5">Belongs to the peptidase S33 family.</text>
</comment>
<feature type="chain" id="PRO_0000080861" description="Juvenile hormone epoxide hydrolase 2">
    <location>
        <begin position="1"/>
        <end position="465"/>
    </location>
</feature>
<feature type="transmembrane region" description="Helical" evidence="5">
    <location>
        <begin position="7"/>
        <end position="27"/>
    </location>
</feature>
<feature type="active site" description="Nucleophile" evidence="1">
    <location>
        <position position="224"/>
    </location>
</feature>
<feature type="active site" description="Proton donor" evidence="2">
    <location>
        <position position="370"/>
    </location>
</feature>
<feature type="active site" description="Proton acceptor" evidence="1">
    <location>
        <position position="427"/>
    </location>
</feature>
<name>HYEP2_CTEFE</name>
<keyword id="KW-0058">Aromatic hydrocarbons catabolism</keyword>
<keyword id="KW-0256">Endoplasmic reticulum</keyword>
<keyword id="KW-0378">Hydrolase</keyword>
<keyword id="KW-0472">Membrane</keyword>
<keyword id="KW-0492">Microsome</keyword>
<keyword id="KW-0812">Transmembrane</keyword>
<keyword id="KW-1133">Transmembrane helix</keyword>
<evidence type="ECO:0000250" key="1">
    <source>
        <dbReference type="UniProtKB" id="P07687"/>
    </source>
</evidence>
<evidence type="ECO:0000250" key="2">
    <source>
        <dbReference type="UniProtKB" id="P34913"/>
    </source>
</evidence>
<evidence type="ECO:0000250" key="3">
    <source>
        <dbReference type="UniProtKB" id="Q6U6J0"/>
    </source>
</evidence>
<evidence type="ECO:0000250" key="4">
    <source>
        <dbReference type="UniProtKB" id="Q8MZR6"/>
    </source>
</evidence>
<evidence type="ECO:0000255" key="5"/>
<evidence type="ECO:0000269" key="6">
    <source>
    </source>
</evidence>
<evidence type="ECO:0000303" key="7">
    <source>
    </source>
</evidence>
<evidence type="ECO:0000305" key="8"/>
<evidence type="ECO:0000312" key="9">
    <source>
        <dbReference type="EMBL" id="AAM22695.1"/>
    </source>
</evidence>
<dbReference type="EC" id="3.3.2.9" evidence="4"/>
<dbReference type="EMBL" id="AF503909">
    <property type="protein sequence ID" value="AAM22695.1"/>
    <property type="molecule type" value="mRNA"/>
</dbReference>
<dbReference type="SMR" id="Q8MZR5"/>
<dbReference type="ESTHER" id="ctefe-Q8MZR5">
    <property type="family name" value="Epoxide_hydrolase"/>
</dbReference>
<dbReference type="MEROPS" id="S33.971"/>
<dbReference type="EnsemblMetazoa" id="XM_026620937.1">
    <property type="protein sequence ID" value="XP_026476722.1"/>
    <property type="gene ID" value="LOC113382710"/>
</dbReference>
<dbReference type="OrthoDB" id="7130006at2759"/>
<dbReference type="GO" id="GO:0005789">
    <property type="term" value="C:endoplasmic reticulum membrane"/>
    <property type="evidence" value="ECO:0007669"/>
    <property type="project" value="UniProtKB-SubCell"/>
</dbReference>
<dbReference type="GO" id="GO:0033961">
    <property type="term" value="F:cis-stilbene-oxide hydrolase activity"/>
    <property type="evidence" value="ECO:0007669"/>
    <property type="project" value="UniProtKB-EC"/>
</dbReference>
<dbReference type="GO" id="GO:0009056">
    <property type="term" value="P:catabolic process"/>
    <property type="evidence" value="ECO:0007669"/>
    <property type="project" value="UniProtKB-KW"/>
</dbReference>
<dbReference type="GO" id="GO:0097176">
    <property type="term" value="P:epoxide metabolic process"/>
    <property type="evidence" value="ECO:0007669"/>
    <property type="project" value="TreeGrafter"/>
</dbReference>
<dbReference type="Gene3D" id="3.40.50.1820">
    <property type="entry name" value="alpha/beta hydrolase"/>
    <property type="match status" value="1"/>
</dbReference>
<dbReference type="InterPro" id="IPR029058">
    <property type="entry name" value="AB_hydrolase_fold"/>
</dbReference>
<dbReference type="InterPro" id="IPR000639">
    <property type="entry name" value="Epox_hydrolase-like"/>
</dbReference>
<dbReference type="InterPro" id="IPR010497">
    <property type="entry name" value="Epoxide_hydro_N"/>
</dbReference>
<dbReference type="InterPro" id="IPR016292">
    <property type="entry name" value="Epoxide_hydrolase"/>
</dbReference>
<dbReference type="PANTHER" id="PTHR21661:SF35">
    <property type="entry name" value="EPOXIDE HYDROLASE"/>
    <property type="match status" value="1"/>
</dbReference>
<dbReference type="PANTHER" id="PTHR21661">
    <property type="entry name" value="EPOXIDE HYDROLASE 1-RELATED"/>
    <property type="match status" value="1"/>
</dbReference>
<dbReference type="Pfam" id="PF06441">
    <property type="entry name" value="EHN"/>
    <property type="match status" value="1"/>
</dbReference>
<dbReference type="PIRSF" id="PIRSF001112">
    <property type="entry name" value="Epoxide_hydrolase"/>
    <property type="match status" value="1"/>
</dbReference>
<dbReference type="PRINTS" id="PR00412">
    <property type="entry name" value="EPOXHYDRLASE"/>
</dbReference>
<dbReference type="SUPFAM" id="SSF53474">
    <property type="entry name" value="alpha/beta-Hydrolases"/>
    <property type="match status" value="1"/>
</dbReference>
<proteinExistence type="evidence at transcript level"/>
<gene>
    <name evidence="7" type="primary">EH2</name>
</gene>
<accession>Q8MZR5</accession>
<protein>
    <recommendedName>
        <fullName>Juvenile hormone epoxide hydrolase 2</fullName>
        <ecNumber evidence="4">3.3.2.9</ecNumber>
    </recommendedName>
    <alternativeName>
        <fullName>CfEH2</fullName>
    </alternativeName>
    <alternativeName>
        <fullName>Juvenile hormone epoxide hydrolase II</fullName>
        <shortName>JHEH II</shortName>
    </alternativeName>
    <alternativeName>
        <fullName>Juvenile hormone-specific epoxide hydrolase II</fullName>
    </alternativeName>
</protein>
<reference evidence="8 9" key="1">
    <citation type="journal article" date="2002" name="Arch. Insect Biochem. Physiol.">
        <title>Cloning, partial purification and in vivo developmental profile of expression of the juvenile hormone epoxide hydrolase of Ctenocephalides felis.</title>
        <authorList>
            <person name="Keiser K.C.L."/>
            <person name="Brandt K.S."/>
            <person name="Silver G.M."/>
            <person name="Wisnewski N."/>
        </authorList>
    </citation>
    <scope>NUCLEOTIDE SEQUENCE [MRNA]</scope>
    <source>
        <tissue evidence="6">Larva</tissue>
    </source>
</reference>
<organism>
    <name type="scientific">Ctenocephalides felis</name>
    <name type="common">Cat flea</name>
    <dbReference type="NCBI Taxonomy" id="7515"/>
    <lineage>
        <taxon>Eukaryota</taxon>
        <taxon>Metazoa</taxon>
        <taxon>Ecdysozoa</taxon>
        <taxon>Arthropoda</taxon>
        <taxon>Hexapoda</taxon>
        <taxon>Insecta</taxon>
        <taxon>Pterygota</taxon>
        <taxon>Neoptera</taxon>
        <taxon>Endopterygota</taxon>
        <taxon>Siphonaptera</taxon>
        <taxon>Pulicidae</taxon>
        <taxon>Archaeopsyllinae</taxon>
        <taxon>Ctenocephalides</taxon>
    </lineage>
</organism>